<feature type="chain" id="PRO_0000178764" description="D-tagatose-1,6-bisphosphate aldolase subunit KbaY">
    <location>
        <begin position="1"/>
        <end position="286"/>
    </location>
</feature>
<feature type="active site" description="Proton donor" evidence="1">
    <location>
        <position position="82"/>
    </location>
</feature>
<feature type="binding site" evidence="1">
    <location>
        <position position="83"/>
    </location>
    <ligand>
        <name>Zn(2+)</name>
        <dbReference type="ChEBI" id="CHEBI:29105"/>
        <note>catalytic</note>
    </ligand>
</feature>
<feature type="binding site" evidence="1">
    <location>
        <position position="180"/>
    </location>
    <ligand>
        <name>Zn(2+)</name>
        <dbReference type="ChEBI" id="CHEBI:29105"/>
        <note>catalytic</note>
    </ligand>
</feature>
<feature type="binding site" evidence="1">
    <location>
        <position position="181"/>
    </location>
    <ligand>
        <name>dihydroxyacetone phosphate</name>
        <dbReference type="ChEBI" id="CHEBI:57642"/>
    </ligand>
</feature>
<feature type="binding site" evidence="1">
    <location>
        <position position="208"/>
    </location>
    <ligand>
        <name>Zn(2+)</name>
        <dbReference type="ChEBI" id="CHEBI:29105"/>
        <note>catalytic</note>
    </ligand>
</feature>
<feature type="binding site" evidence="1">
    <location>
        <begin position="209"/>
        <end position="211"/>
    </location>
    <ligand>
        <name>dihydroxyacetone phosphate</name>
        <dbReference type="ChEBI" id="CHEBI:57642"/>
    </ligand>
</feature>
<feature type="binding site" evidence="1">
    <location>
        <begin position="230"/>
        <end position="233"/>
    </location>
    <ligand>
        <name>dihydroxyacetone phosphate</name>
        <dbReference type="ChEBI" id="CHEBI:57642"/>
    </ligand>
</feature>
<name>KBAY_ECO57</name>
<keyword id="KW-0456">Lyase</keyword>
<keyword id="KW-0479">Metal-binding</keyword>
<keyword id="KW-1185">Reference proteome</keyword>
<keyword id="KW-0862">Zinc</keyword>
<gene>
    <name evidence="1" type="primary">kbaY</name>
    <name type="synonym">agaY</name>
    <name type="ordered locus">Z4491</name>
    <name type="ordered locus">ECs4017</name>
</gene>
<evidence type="ECO:0000255" key="1">
    <source>
        <dbReference type="HAMAP-Rule" id="MF_01293"/>
    </source>
</evidence>
<accession>P0AB76</accession>
<accession>P42908</accession>
<comment type="function">
    <text evidence="1">Catalytic subunit of the tagatose-1,6-bisphosphate aldolase KbaYZ, which catalyzes the reversible aldol condensation of dihydroxyacetone phosphate (DHAP or glycerone-phosphate) with glyceraldehyde 3-phosphate (G3P) to produce tagatose 1,6-bisphosphate (TBP). Requires KbaZ subunit for full activity and stability.</text>
</comment>
<comment type="catalytic activity">
    <reaction evidence="1">
        <text>D-tagatofuranose 1,6-bisphosphate = D-glyceraldehyde 3-phosphate + dihydroxyacetone phosphate</text>
        <dbReference type="Rhea" id="RHEA:22948"/>
        <dbReference type="ChEBI" id="CHEBI:57642"/>
        <dbReference type="ChEBI" id="CHEBI:58694"/>
        <dbReference type="ChEBI" id="CHEBI:59776"/>
        <dbReference type="EC" id="4.1.2.40"/>
    </reaction>
</comment>
<comment type="cofactor">
    <cofactor evidence="1">
        <name>Zn(2+)</name>
        <dbReference type="ChEBI" id="CHEBI:29105"/>
    </cofactor>
    <text evidence="1">Binds 1 zinc ion per subunit.</text>
</comment>
<comment type="pathway">
    <text evidence="1">Carbohydrate metabolism; D-tagatose 6-phosphate degradation; D-glyceraldehyde 3-phosphate and glycerone phosphate from D-tagatose 6-phosphate: step 2/2.</text>
</comment>
<comment type="subunit">
    <text evidence="1">Homotetramer. Forms a complex with KbaZ.</text>
</comment>
<comment type="similarity">
    <text evidence="1">Belongs to the class II fructose-bisphosphate aldolase family. TagBP aldolase KbaY subfamily.</text>
</comment>
<dbReference type="EC" id="4.1.2.40" evidence="1"/>
<dbReference type="EMBL" id="AE005174">
    <property type="protein sequence ID" value="AAG58269.1"/>
    <property type="molecule type" value="Genomic_DNA"/>
</dbReference>
<dbReference type="EMBL" id="BA000007">
    <property type="protein sequence ID" value="BAB37440.1"/>
    <property type="molecule type" value="Genomic_DNA"/>
</dbReference>
<dbReference type="PIR" id="A85976">
    <property type="entry name" value="A85976"/>
</dbReference>
<dbReference type="PIR" id="A91131">
    <property type="entry name" value="A91131"/>
</dbReference>
<dbReference type="RefSeq" id="NP_312044.1">
    <property type="nucleotide sequence ID" value="NC_002695.1"/>
</dbReference>
<dbReference type="RefSeq" id="WP_000022766.1">
    <property type="nucleotide sequence ID" value="NZ_VOAI01000009.1"/>
</dbReference>
<dbReference type="SMR" id="P0AB76"/>
<dbReference type="STRING" id="155864.Z4491"/>
<dbReference type="GeneID" id="75203745"/>
<dbReference type="GeneID" id="916148"/>
<dbReference type="KEGG" id="ece:Z4491"/>
<dbReference type="KEGG" id="ecs:ECs_4017"/>
<dbReference type="PATRIC" id="fig|386585.9.peg.4193"/>
<dbReference type="eggNOG" id="COG0191">
    <property type="taxonomic scope" value="Bacteria"/>
</dbReference>
<dbReference type="HOGENOM" id="CLU_040088_0_1_6"/>
<dbReference type="OMA" id="PRTWGKL"/>
<dbReference type="BioCyc" id="MetaCyc:MONOMER-18279"/>
<dbReference type="UniPathway" id="UPA00704">
    <property type="reaction ID" value="UER00716"/>
</dbReference>
<dbReference type="Proteomes" id="UP000000558">
    <property type="component" value="Chromosome"/>
</dbReference>
<dbReference type="Proteomes" id="UP000002519">
    <property type="component" value="Chromosome"/>
</dbReference>
<dbReference type="GO" id="GO:0005829">
    <property type="term" value="C:cytosol"/>
    <property type="evidence" value="ECO:0007669"/>
    <property type="project" value="TreeGrafter"/>
</dbReference>
<dbReference type="GO" id="GO:0009025">
    <property type="term" value="F:tagatose-bisphosphate aldolase activity"/>
    <property type="evidence" value="ECO:0007669"/>
    <property type="project" value="UniProtKB-UniRule"/>
</dbReference>
<dbReference type="GO" id="GO:0008270">
    <property type="term" value="F:zinc ion binding"/>
    <property type="evidence" value="ECO:0007669"/>
    <property type="project" value="UniProtKB-UniRule"/>
</dbReference>
<dbReference type="GO" id="GO:0005975">
    <property type="term" value="P:carbohydrate metabolic process"/>
    <property type="evidence" value="ECO:0007669"/>
    <property type="project" value="InterPro"/>
</dbReference>
<dbReference type="GO" id="GO:2001059">
    <property type="term" value="P:D-tagatose 6-phosphate catabolic process"/>
    <property type="evidence" value="ECO:0007669"/>
    <property type="project" value="UniProtKB-UniRule"/>
</dbReference>
<dbReference type="CDD" id="cd00453">
    <property type="entry name" value="FTBP_aldolase_II"/>
    <property type="match status" value="1"/>
</dbReference>
<dbReference type="FunFam" id="3.20.20.70:FF:000043">
    <property type="entry name" value="D-tagatose-1,6-bisphosphate aldolase subunit GatY"/>
    <property type="match status" value="1"/>
</dbReference>
<dbReference type="Gene3D" id="3.20.20.70">
    <property type="entry name" value="Aldolase class I"/>
    <property type="match status" value="1"/>
</dbReference>
<dbReference type="HAMAP" id="MF_01293">
    <property type="entry name" value="TagBP_aldolase_KbaY"/>
    <property type="match status" value="1"/>
</dbReference>
<dbReference type="InterPro" id="IPR013785">
    <property type="entry name" value="Aldolase_TIM"/>
</dbReference>
<dbReference type="InterPro" id="IPR050246">
    <property type="entry name" value="Class_II_FBP_aldolase"/>
</dbReference>
<dbReference type="InterPro" id="IPR000771">
    <property type="entry name" value="FBA_II"/>
</dbReference>
<dbReference type="InterPro" id="IPR023788">
    <property type="entry name" value="TagBP_ald_KbaY"/>
</dbReference>
<dbReference type="InterPro" id="IPR011288">
    <property type="entry name" value="TagBP_ald_KbaY/GatY"/>
</dbReference>
<dbReference type="NCBIfam" id="TIGR00167">
    <property type="entry name" value="cbbA"/>
    <property type="match status" value="1"/>
</dbReference>
<dbReference type="NCBIfam" id="NF006626">
    <property type="entry name" value="PRK09195.1"/>
    <property type="match status" value="1"/>
</dbReference>
<dbReference type="NCBIfam" id="NF009374">
    <property type="entry name" value="PRK12737.1"/>
    <property type="match status" value="1"/>
</dbReference>
<dbReference type="NCBIfam" id="NF009375">
    <property type="entry name" value="PRK12738.1"/>
    <property type="match status" value="1"/>
</dbReference>
<dbReference type="NCBIfam" id="TIGR01858">
    <property type="entry name" value="tag_bisphos_ald"/>
    <property type="match status" value="1"/>
</dbReference>
<dbReference type="PANTHER" id="PTHR30304">
    <property type="entry name" value="D-TAGATOSE-1,6-BISPHOSPHATE ALDOLASE"/>
    <property type="match status" value="1"/>
</dbReference>
<dbReference type="PANTHER" id="PTHR30304:SF0">
    <property type="entry name" value="D-TAGATOSE-1,6-BISPHOSPHATE ALDOLASE SUBUNIT GATY-RELATED"/>
    <property type="match status" value="1"/>
</dbReference>
<dbReference type="Pfam" id="PF01116">
    <property type="entry name" value="F_bP_aldolase"/>
    <property type="match status" value="1"/>
</dbReference>
<dbReference type="PIRSF" id="PIRSF001359">
    <property type="entry name" value="F_bP_aldolase_II"/>
    <property type="match status" value="1"/>
</dbReference>
<dbReference type="SUPFAM" id="SSF51569">
    <property type="entry name" value="Aldolase"/>
    <property type="match status" value="1"/>
</dbReference>
<dbReference type="PROSITE" id="PS00602">
    <property type="entry name" value="ALDOLASE_CLASS_II_1"/>
    <property type="match status" value="1"/>
</dbReference>
<dbReference type="PROSITE" id="PS00806">
    <property type="entry name" value="ALDOLASE_CLASS_II_2"/>
    <property type="match status" value="1"/>
</dbReference>
<protein>
    <recommendedName>
        <fullName evidence="1">D-tagatose-1,6-bisphosphate aldolase subunit KbaY</fullName>
        <shortName evidence="1">TBPA</shortName>
        <shortName evidence="1">TagBP aldolase</shortName>
        <ecNumber evidence="1">4.1.2.40</ecNumber>
    </recommendedName>
    <alternativeName>
        <fullName evidence="1">D-tagatose-bisphosphate aldolase class II</fullName>
    </alternativeName>
    <alternativeName>
        <fullName evidence="1">Ketose 1,6-bisphosphate aldolase class II</fullName>
    </alternativeName>
    <alternativeName>
        <fullName evidence="1">Tagatose-bisphosphate aldolase</fullName>
    </alternativeName>
</protein>
<organism>
    <name type="scientific">Escherichia coli O157:H7</name>
    <dbReference type="NCBI Taxonomy" id="83334"/>
    <lineage>
        <taxon>Bacteria</taxon>
        <taxon>Pseudomonadati</taxon>
        <taxon>Pseudomonadota</taxon>
        <taxon>Gammaproteobacteria</taxon>
        <taxon>Enterobacterales</taxon>
        <taxon>Enterobacteriaceae</taxon>
        <taxon>Escherichia</taxon>
    </lineage>
</organism>
<reference key="1">
    <citation type="journal article" date="2001" name="Nature">
        <title>Genome sequence of enterohaemorrhagic Escherichia coli O157:H7.</title>
        <authorList>
            <person name="Perna N.T."/>
            <person name="Plunkett G. III"/>
            <person name="Burland V."/>
            <person name="Mau B."/>
            <person name="Glasner J.D."/>
            <person name="Rose D.J."/>
            <person name="Mayhew G.F."/>
            <person name="Evans P.S."/>
            <person name="Gregor J."/>
            <person name="Kirkpatrick H.A."/>
            <person name="Posfai G."/>
            <person name="Hackett J."/>
            <person name="Klink S."/>
            <person name="Boutin A."/>
            <person name="Shao Y."/>
            <person name="Miller L."/>
            <person name="Grotbeck E.J."/>
            <person name="Davis N.W."/>
            <person name="Lim A."/>
            <person name="Dimalanta E.T."/>
            <person name="Potamousis K."/>
            <person name="Apodaca J."/>
            <person name="Anantharaman T.S."/>
            <person name="Lin J."/>
            <person name="Yen G."/>
            <person name="Schwartz D.C."/>
            <person name="Welch R.A."/>
            <person name="Blattner F.R."/>
        </authorList>
    </citation>
    <scope>NUCLEOTIDE SEQUENCE [LARGE SCALE GENOMIC DNA]</scope>
    <source>
        <strain>O157:H7 / EDL933 / ATCC 700927 / EHEC</strain>
    </source>
</reference>
<reference key="2">
    <citation type="journal article" date="2001" name="DNA Res.">
        <title>Complete genome sequence of enterohemorrhagic Escherichia coli O157:H7 and genomic comparison with a laboratory strain K-12.</title>
        <authorList>
            <person name="Hayashi T."/>
            <person name="Makino K."/>
            <person name="Ohnishi M."/>
            <person name="Kurokawa K."/>
            <person name="Ishii K."/>
            <person name="Yokoyama K."/>
            <person name="Han C.-G."/>
            <person name="Ohtsubo E."/>
            <person name="Nakayama K."/>
            <person name="Murata T."/>
            <person name="Tanaka M."/>
            <person name="Tobe T."/>
            <person name="Iida T."/>
            <person name="Takami H."/>
            <person name="Honda T."/>
            <person name="Sasakawa C."/>
            <person name="Ogasawara N."/>
            <person name="Yasunaga T."/>
            <person name="Kuhara S."/>
            <person name="Shiba T."/>
            <person name="Hattori M."/>
            <person name="Shinagawa H."/>
        </authorList>
    </citation>
    <scope>NUCLEOTIDE SEQUENCE [LARGE SCALE GENOMIC DNA]</scope>
    <source>
        <strain>O157:H7 / Sakai / RIMD 0509952 / EHEC</strain>
    </source>
</reference>
<sequence>MSIISTKYLLQDAQANGYAVPAFNIHNAETIQAILEVCSEMRSPVILAGTPGTFKHIALEEIYALCSAYSTTYNMPLALHLDHHESLDDIRRKVHAGVRSAMIDGSHFPFAENVKLVKSVVDFCHSQDCSVEAELGRLGGVEDDMSVDAESAFLTDPQEAKRFVELTGVDSLAVAIGTAHGLYSKTPKIDFQRLAEIREVVDVPLVLHGASDVPDEFVRRTIELGVTKVNVATELKIAFAGAVKAWFAENPQGNDPRYYMRVGMDAMKEVVRNKINVCGSANRISA</sequence>
<proteinExistence type="inferred from homology"/>